<reference key="1">
    <citation type="submission" date="2006-06" db="EMBL/GenBank/DDBJ databases">
        <title>Complete sequence of Pseudoalteromonas atlantica T6c.</title>
        <authorList>
            <consortium name="US DOE Joint Genome Institute"/>
            <person name="Copeland A."/>
            <person name="Lucas S."/>
            <person name="Lapidus A."/>
            <person name="Barry K."/>
            <person name="Detter J.C."/>
            <person name="Glavina del Rio T."/>
            <person name="Hammon N."/>
            <person name="Israni S."/>
            <person name="Dalin E."/>
            <person name="Tice H."/>
            <person name="Pitluck S."/>
            <person name="Saunders E."/>
            <person name="Brettin T."/>
            <person name="Bruce D."/>
            <person name="Han C."/>
            <person name="Tapia R."/>
            <person name="Gilna P."/>
            <person name="Schmutz J."/>
            <person name="Larimer F."/>
            <person name="Land M."/>
            <person name="Hauser L."/>
            <person name="Kyrpides N."/>
            <person name="Kim E."/>
            <person name="Karls A.C."/>
            <person name="Bartlett D."/>
            <person name="Higgins B.P."/>
            <person name="Richardson P."/>
        </authorList>
    </citation>
    <scope>NUCLEOTIDE SEQUENCE [LARGE SCALE GENOMIC DNA]</scope>
    <source>
        <strain>T6c / ATCC BAA-1087</strain>
    </source>
</reference>
<accession>Q15MU0</accession>
<protein>
    <recommendedName>
        <fullName evidence="1">ATP synthase subunit b 2</fullName>
    </recommendedName>
    <alternativeName>
        <fullName evidence="1">ATP synthase F(0) sector subunit b 2</fullName>
    </alternativeName>
    <alternativeName>
        <fullName evidence="1">ATPase subunit I 2</fullName>
    </alternativeName>
    <alternativeName>
        <fullName evidence="1">F-type ATPase subunit b 2</fullName>
        <shortName evidence="1">F-ATPase subunit b 2</shortName>
    </alternativeName>
</protein>
<sequence>MNINATLFGELLAFIFFVWFCMKFVWPPIMGAIEERQKKIADGLAASERGEKDLELAQAKATEQLKEAKTQAAGIIEQAKKRGSQIVDEETQRAHQERENIIAQGHAEIEAERNRAKEDLRKQVAALAVAGAERILERQIDAAAQSDIVEKLVAEL</sequence>
<feature type="chain" id="PRO_0000368681" description="ATP synthase subunit b 2">
    <location>
        <begin position="1"/>
        <end position="156"/>
    </location>
</feature>
<feature type="transmembrane region" description="Helical" evidence="1">
    <location>
        <begin position="11"/>
        <end position="31"/>
    </location>
</feature>
<evidence type="ECO:0000255" key="1">
    <source>
        <dbReference type="HAMAP-Rule" id="MF_01398"/>
    </source>
</evidence>
<proteinExistence type="inferred from homology"/>
<name>ATPF2_PSEA6</name>
<dbReference type="EMBL" id="CP000388">
    <property type="protein sequence ID" value="ABG42798.1"/>
    <property type="molecule type" value="Genomic_DNA"/>
</dbReference>
<dbReference type="SMR" id="Q15MU0"/>
<dbReference type="STRING" id="342610.Patl_4299"/>
<dbReference type="KEGG" id="pat:Patl_4299"/>
<dbReference type="eggNOG" id="COG0711">
    <property type="taxonomic scope" value="Bacteria"/>
</dbReference>
<dbReference type="HOGENOM" id="CLU_079215_4_5_6"/>
<dbReference type="OrthoDB" id="9788020at2"/>
<dbReference type="Proteomes" id="UP000001981">
    <property type="component" value="Chromosome"/>
</dbReference>
<dbReference type="GO" id="GO:0005886">
    <property type="term" value="C:plasma membrane"/>
    <property type="evidence" value="ECO:0007669"/>
    <property type="project" value="UniProtKB-SubCell"/>
</dbReference>
<dbReference type="GO" id="GO:0045259">
    <property type="term" value="C:proton-transporting ATP synthase complex"/>
    <property type="evidence" value="ECO:0007669"/>
    <property type="project" value="UniProtKB-KW"/>
</dbReference>
<dbReference type="GO" id="GO:0046933">
    <property type="term" value="F:proton-transporting ATP synthase activity, rotational mechanism"/>
    <property type="evidence" value="ECO:0007669"/>
    <property type="project" value="UniProtKB-UniRule"/>
</dbReference>
<dbReference type="GO" id="GO:0046961">
    <property type="term" value="F:proton-transporting ATPase activity, rotational mechanism"/>
    <property type="evidence" value="ECO:0007669"/>
    <property type="project" value="TreeGrafter"/>
</dbReference>
<dbReference type="CDD" id="cd06503">
    <property type="entry name" value="ATP-synt_Fo_b"/>
    <property type="match status" value="1"/>
</dbReference>
<dbReference type="Gene3D" id="6.10.250.1580">
    <property type="match status" value="1"/>
</dbReference>
<dbReference type="HAMAP" id="MF_01398">
    <property type="entry name" value="ATP_synth_b_bprime"/>
    <property type="match status" value="1"/>
</dbReference>
<dbReference type="InterPro" id="IPR028987">
    <property type="entry name" value="ATP_synth_B-like_membr_sf"/>
</dbReference>
<dbReference type="InterPro" id="IPR002146">
    <property type="entry name" value="ATP_synth_b/b'su_bac/chlpt"/>
</dbReference>
<dbReference type="InterPro" id="IPR005864">
    <property type="entry name" value="ATP_synth_F0_bsu_bac"/>
</dbReference>
<dbReference type="InterPro" id="IPR050059">
    <property type="entry name" value="ATP_synthase_B_chain"/>
</dbReference>
<dbReference type="NCBIfam" id="TIGR01144">
    <property type="entry name" value="ATP_synt_b"/>
    <property type="match status" value="1"/>
</dbReference>
<dbReference type="NCBIfam" id="NF004411">
    <property type="entry name" value="PRK05759.1-2"/>
    <property type="match status" value="1"/>
</dbReference>
<dbReference type="NCBIfam" id="NF004413">
    <property type="entry name" value="PRK05759.1-4"/>
    <property type="match status" value="1"/>
</dbReference>
<dbReference type="PANTHER" id="PTHR33445:SF1">
    <property type="entry name" value="ATP SYNTHASE SUBUNIT B"/>
    <property type="match status" value="1"/>
</dbReference>
<dbReference type="PANTHER" id="PTHR33445">
    <property type="entry name" value="ATP SYNTHASE SUBUNIT B', CHLOROPLASTIC"/>
    <property type="match status" value="1"/>
</dbReference>
<dbReference type="Pfam" id="PF00430">
    <property type="entry name" value="ATP-synt_B"/>
    <property type="match status" value="1"/>
</dbReference>
<dbReference type="SUPFAM" id="SSF81573">
    <property type="entry name" value="F1F0 ATP synthase subunit B, membrane domain"/>
    <property type="match status" value="1"/>
</dbReference>
<gene>
    <name evidence="1" type="primary">atpF2</name>
    <name type="ordered locus">Patl_4299</name>
</gene>
<comment type="function">
    <text evidence="1">F(1)F(0) ATP synthase produces ATP from ADP in the presence of a proton or sodium gradient. F-type ATPases consist of two structural domains, F(1) containing the extramembraneous catalytic core and F(0) containing the membrane proton channel, linked together by a central stalk and a peripheral stalk. During catalysis, ATP synthesis in the catalytic domain of F(1) is coupled via a rotary mechanism of the central stalk subunits to proton translocation.</text>
</comment>
<comment type="function">
    <text evidence="1">Component of the F(0) channel, it forms part of the peripheral stalk, linking F(1) to F(0).</text>
</comment>
<comment type="subunit">
    <text evidence="1">F-type ATPases have 2 components, F(1) - the catalytic core - and F(0) - the membrane proton channel. F(1) has five subunits: alpha(3), beta(3), gamma(1), delta(1), epsilon(1). F(0) has three main subunits: a(1), b(2) and c(10-14). The alpha and beta chains form an alternating ring which encloses part of the gamma chain. F(1) is attached to F(0) by a central stalk formed by the gamma and epsilon chains, while a peripheral stalk is formed by the delta and b chains.</text>
</comment>
<comment type="subcellular location">
    <subcellularLocation>
        <location evidence="1">Cell inner membrane</location>
        <topology evidence="1">Single-pass membrane protein</topology>
    </subcellularLocation>
</comment>
<comment type="similarity">
    <text evidence="1">Belongs to the ATPase B chain family.</text>
</comment>
<organism>
    <name type="scientific">Pseudoalteromonas atlantica (strain T6c / ATCC BAA-1087)</name>
    <dbReference type="NCBI Taxonomy" id="3042615"/>
    <lineage>
        <taxon>Bacteria</taxon>
        <taxon>Pseudomonadati</taxon>
        <taxon>Pseudomonadota</taxon>
        <taxon>Gammaproteobacteria</taxon>
        <taxon>Alteromonadales</taxon>
        <taxon>Alteromonadaceae</taxon>
        <taxon>Paraglaciecola</taxon>
    </lineage>
</organism>
<keyword id="KW-0066">ATP synthesis</keyword>
<keyword id="KW-0997">Cell inner membrane</keyword>
<keyword id="KW-1003">Cell membrane</keyword>
<keyword id="KW-0138">CF(0)</keyword>
<keyword id="KW-0375">Hydrogen ion transport</keyword>
<keyword id="KW-0406">Ion transport</keyword>
<keyword id="KW-0472">Membrane</keyword>
<keyword id="KW-0812">Transmembrane</keyword>
<keyword id="KW-1133">Transmembrane helix</keyword>
<keyword id="KW-0813">Transport</keyword>